<feature type="chain" id="PRO_0000160966" description="Imidazolonepropionase">
    <location>
        <begin position="1"/>
        <end position="421"/>
    </location>
</feature>
<feature type="binding site" evidence="1">
    <location>
        <position position="81"/>
    </location>
    <ligand>
        <name>Fe(3+)</name>
        <dbReference type="ChEBI" id="CHEBI:29034"/>
    </ligand>
</feature>
<feature type="binding site" evidence="1">
    <location>
        <position position="81"/>
    </location>
    <ligand>
        <name>Zn(2+)</name>
        <dbReference type="ChEBI" id="CHEBI:29105"/>
    </ligand>
</feature>
<feature type="binding site" evidence="1">
    <location>
        <position position="83"/>
    </location>
    <ligand>
        <name>Fe(3+)</name>
        <dbReference type="ChEBI" id="CHEBI:29034"/>
    </ligand>
</feature>
<feature type="binding site" evidence="1">
    <location>
        <position position="83"/>
    </location>
    <ligand>
        <name>Zn(2+)</name>
        <dbReference type="ChEBI" id="CHEBI:29105"/>
    </ligand>
</feature>
<feature type="binding site" evidence="1">
    <location>
        <position position="90"/>
    </location>
    <ligand>
        <name>4-imidazolone-5-propanoate</name>
        <dbReference type="ChEBI" id="CHEBI:77893"/>
    </ligand>
</feature>
<feature type="binding site" evidence="1">
    <location>
        <position position="153"/>
    </location>
    <ligand>
        <name>4-imidazolone-5-propanoate</name>
        <dbReference type="ChEBI" id="CHEBI:77893"/>
    </ligand>
</feature>
<feature type="binding site" evidence="1">
    <location>
        <position position="153"/>
    </location>
    <ligand>
        <name>N-formimidoyl-L-glutamate</name>
        <dbReference type="ChEBI" id="CHEBI:58928"/>
    </ligand>
</feature>
<feature type="binding site" evidence="1">
    <location>
        <position position="186"/>
    </location>
    <ligand>
        <name>4-imidazolone-5-propanoate</name>
        <dbReference type="ChEBI" id="CHEBI:77893"/>
    </ligand>
</feature>
<feature type="binding site" evidence="1">
    <location>
        <position position="251"/>
    </location>
    <ligand>
        <name>Fe(3+)</name>
        <dbReference type="ChEBI" id="CHEBI:29034"/>
    </ligand>
</feature>
<feature type="binding site" evidence="1">
    <location>
        <position position="251"/>
    </location>
    <ligand>
        <name>Zn(2+)</name>
        <dbReference type="ChEBI" id="CHEBI:29105"/>
    </ligand>
</feature>
<feature type="binding site" evidence="1">
    <location>
        <position position="254"/>
    </location>
    <ligand>
        <name>4-imidazolone-5-propanoate</name>
        <dbReference type="ChEBI" id="CHEBI:77893"/>
    </ligand>
</feature>
<feature type="binding site" evidence="1">
    <location>
        <position position="326"/>
    </location>
    <ligand>
        <name>Fe(3+)</name>
        <dbReference type="ChEBI" id="CHEBI:29034"/>
    </ligand>
</feature>
<feature type="binding site" evidence="1">
    <location>
        <position position="326"/>
    </location>
    <ligand>
        <name>Zn(2+)</name>
        <dbReference type="ChEBI" id="CHEBI:29105"/>
    </ligand>
</feature>
<feature type="binding site" evidence="1">
    <location>
        <position position="328"/>
    </location>
    <ligand>
        <name>N-formimidoyl-L-glutamate</name>
        <dbReference type="ChEBI" id="CHEBI:58928"/>
    </ligand>
</feature>
<feature type="binding site" evidence="1">
    <location>
        <position position="330"/>
    </location>
    <ligand>
        <name>N-formimidoyl-L-glutamate</name>
        <dbReference type="ChEBI" id="CHEBI:58928"/>
    </ligand>
</feature>
<feature type="binding site" evidence="1">
    <location>
        <position position="331"/>
    </location>
    <ligand>
        <name>4-imidazolone-5-propanoate</name>
        <dbReference type="ChEBI" id="CHEBI:77893"/>
    </ligand>
</feature>
<protein>
    <recommendedName>
        <fullName evidence="1">Imidazolonepropionase</fullName>
        <ecNumber evidence="1">3.5.2.7</ecNumber>
    </recommendedName>
    <alternativeName>
        <fullName evidence="1">Imidazolone-5-propionate hydrolase</fullName>
    </alternativeName>
</protein>
<gene>
    <name evidence="1" type="primary">hutI</name>
    <name type="ordered locus">SPy_2081</name>
    <name type="ordered locus">M5005_Spy1770</name>
</gene>
<keyword id="KW-0963">Cytoplasm</keyword>
<keyword id="KW-0369">Histidine metabolism</keyword>
<keyword id="KW-0378">Hydrolase</keyword>
<keyword id="KW-0408">Iron</keyword>
<keyword id="KW-0479">Metal-binding</keyword>
<keyword id="KW-1185">Reference proteome</keyword>
<keyword id="KW-0862">Zinc</keyword>
<reference key="1">
    <citation type="journal article" date="2001" name="Proc. Natl. Acad. Sci. U.S.A.">
        <title>Complete genome sequence of an M1 strain of Streptococcus pyogenes.</title>
        <authorList>
            <person name="Ferretti J.J."/>
            <person name="McShan W.M."/>
            <person name="Ajdic D.J."/>
            <person name="Savic D.J."/>
            <person name="Savic G."/>
            <person name="Lyon K."/>
            <person name="Primeaux C."/>
            <person name="Sezate S."/>
            <person name="Suvorov A.N."/>
            <person name="Kenton S."/>
            <person name="Lai H.S."/>
            <person name="Lin S.P."/>
            <person name="Qian Y."/>
            <person name="Jia H.G."/>
            <person name="Najar F.Z."/>
            <person name="Ren Q."/>
            <person name="Zhu H."/>
            <person name="Song L."/>
            <person name="White J."/>
            <person name="Yuan X."/>
            <person name="Clifton S.W."/>
            <person name="Roe B.A."/>
            <person name="McLaughlin R.E."/>
        </authorList>
    </citation>
    <scope>NUCLEOTIDE SEQUENCE [LARGE SCALE GENOMIC DNA]</scope>
    <source>
        <strain>ATCC 700294 / SF370 / Serotype M1</strain>
    </source>
</reference>
<reference key="2">
    <citation type="journal article" date="2005" name="J. Infect. Dis.">
        <title>Evolutionary origin and emergence of a highly successful clone of serotype M1 group A Streptococcus involved multiple horizontal gene transfer events.</title>
        <authorList>
            <person name="Sumby P."/>
            <person name="Porcella S.F."/>
            <person name="Madrigal A.G."/>
            <person name="Barbian K.D."/>
            <person name="Virtaneva K."/>
            <person name="Ricklefs S.M."/>
            <person name="Sturdevant D.E."/>
            <person name="Graham M.R."/>
            <person name="Vuopio-Varkila J."/>
            <person name="Hoe N.P."/>
            <person name="Musser J.M."/>
        </authorList>
    </citation>
    <scope>NUCLEOTIDE SEQUENCE [LARGE SCALE GENOMIC DNA]</scope>
    <source>
        <strain>ATCC BAA-947 / MGAS5005 / Serotype M1</strain>
    </source>
</reference>
<evidence type="ECO:0000255" key="1">
    <source>
        <dbReference type="HAMAP-Rule" id="MF_00372"/>
    </source>
</evidence>
<evidence type="ECO:0000305" key="2"/>
<sequence length="421" mass="45981">MVADVLLTHFNQLFCLNDPGHPLTGQEMKKATIVEDGYIAIKDGLIVALGSGEPDAELVGTQTIMRSYKGKIATPGIIDCHTHLVYGGSREHEFAKKLAGVSYLDILAQGGGILSTVRATRSASFDNLYQKSKRLLDYMLLHGVTTVEAKSGYGLDWETEKRQLDVVAALEKDHPIDLVSTFMAAHAIPEEYKGNPKAYLDVIIKDMLPVVKEENLAEFCDIFCEKNVFTADESRYLLSKAKEMGFKLRIHADEIASIGGVDVAAELSAVSAEHLMMITDDGIAKLIGAGVIGNLLPATTFSLMEDTYAPARKMIDAGMAITLSTDSNPGSCPTANMQFVMQLGCFMLRLTPIEVLNAVTINAAYSVNRQERVGSLTVGKEADIAIFDAPNIDYPFYFFATNLIHQVYKKGQLTVDRGRIL</sequence>
<accession>P58080</accession>
<accession>Q48W87</accession>
<proteinExistence type="inferred from homology"/>
<organism>
    <name type="scientific">Streptococcus pyogenes serotype M1</name>
    <dbReference type="NCBI Taxonomy" id="301447"/>
    <lineage>
        <taxon>Bacteria</taxon>
        <taxon>Bacillati</taxon>
        <taxon>Bacillota</taxon>
        <taxon>Bacilli</taxon>
        <taxon>Lactobacillales</taxon>
        <taxon>Streptococcaceae</taxon>
        <taxon>Streptococcus</taxon>
    </lineage>
</organism>
<dbReference type="EC" id="3.5.2.7" evidence="1"/>
<dbReference type="EMBL" id="AE004092">
    <property type="protein sequence ID" value="AAK34734.1"/>
    <property type="status" value="ALT_INIT"/>
    <property type="molecule type" value="Genomic_DNA"/>
</dbReference>
<dbReference type="EMBL" id="CP000017">
    <property type="protein sequence ID" value="AAZ52388.1"/>
    <property type="molecule type" value="Genomic_DNA"/>
</dbReference>
<dbReference type="RefSeq" id="NP_270013.1">
    <property type="nucleotide sequence ID" value="NC_002737.2"/>
</dbReference>
<dbReference type="SMR" id="P58080"/>
<dbReference type="PaxDb" id="1314-HKU360_01883"/>
<dbReference type="KEGG" id="spy:SPy_2081"/>
<dbReference type="KEGG" id="spz:M5005_Spy1770"/>
<dbReference type="PATRIC" id="fig|160490.10.peg.1803"/>
<dbReference type="HOGENOM" id="CLU_041647_0_1_9"/>
<dbReference type="OMA" id="CAPHARW"/>
<dbReference type="UniPathway" id="UPA00379">
    <property type="reaction ID" value="UER00551"/>
</dbReference>
<dbReference type="Proteomes" id="UP000000750">
    <property type="component" value="Chromosome"/>
</dbReference>
<dbReference type="GO" id="GO:0005737">
    <property type="term" value="C:cytoplasm"/>
    <property type="evidence" value="ECO:0007669"/>
    <property type="project" value="UniProtKB-SubCell"/>
</dbReference>
<dbReference type="GO" id="GO:0050480">
    <property type="term" value="F:imidazolonepropionase activity"/>
    <property type="evidence" value="ECO:0007669"/>
    <property type="project" value="UniProtKB-UniRule"/>
</dbReference>
<dbReference type="GO" id="GO:0005506">
    <property type="term" value="F:iron ion binding"/>
    <property type="evidence" value="ECO:0007669"/>
    <property type="project" value="UniProtKB-UniRule"/>
</dbReference>
<dbReference type="GO" id="GO:0008270">
    <property type="term" value="F:zinc ion binding"/>
    <property type="evidence" value="ECO:0007669"/>
    <property type="project" value="UniProtKB-UniRule"/>
</dbReference>
<dbReference type="GO" id="GO:0019556">
    <property type="term" value="P:L-histidine catabolic process to glutamate and formamide"/>
    <property type="evidence" value="ECO:0007669"/>
    <property type="project" value="UniProtKB-UniPathway"/>
</dbReference>
<dbReference type="GO" id="GO:0019557">
    <property type="term" value="P:L-histidine catabolic process to glutamate and formate"/>
    <property type="evidence" value="ECO:0007669"/>
    <property type="project" value="UniProtKB-UniPathway"/>
</dbReference>
<dbReference type="CDD" id="cd01296">
    <property type="entry name" value="Imidazolone-5PH"/>
    <property type="match status" value="1"/>
</dbReference>
<dbReference type="FunFam" id="3.20.20.140:FF:000007">
    <property type="entry name" value="Imidazolonepropionase"/>
    <property type="match status" value="1"/>
</dbReference>
<dbReference type="Gene3D" id="3.20.20.140">
    <property type="entry name" value="Metal-dependent hydrolases"/>
    <property type="match status" value="1"/>
</dbReference>
<dbReference type="Gene3D" id="2.30.40.10">
    <property type="entry name" value="Urease, subunit C, domain 1"/>
    <property type="match status" value="1"/>
</dbReference>
<dbReference type="HAMAP" id="MF_00372">
    <property type="entry name" value="HutI"/>
    <property type="match status" value="1"/>
</dbReference>
<dbReference type="InterPro" id="IPR006680">
    <property type="entry name" value="Amidohydro-rel"/>
</dbReference>
<dbReference type="InterPro" id="IPR005920">
    <property type="entry name" value="HutI"/>
</dbReference>
<dbReference type="InterPro" id="IPR011059">
    <property type="entry name" value="Metal-dep_hydrolase_composite"/>
</dbReference>
<dbReference type="InterPro" id="IPR032466">
    <property type="entry name" value="Metal_Hydrolase"/>
</dbReference>
<dbReference type="NCBIfam" id="TIGR01224">
    <property type="entry name" value="hutI"/>
    <property type="match status" value="1"/>
</dbReference>
<dbReference type="PANTHER" id="PTHR42752">
    <property type="entry name" value="IMIDAZOLONEPROPIONASE"/>
    <property type="match status" value="1"/>
</dbReference>
<dbReference type="PANTHER" id="PTHR42752:SF1">
    <property type="entry name" value="IMIDAZOLONEPROPIONASE-RELATED"/>
    <property type="match status" value="1"/>
</dbReference>
<dbReference type="Pfam" id="PF01979">
    <property type="entry name" value="Amidohydro_1"/>
    <property type="match status" value="1"/>
</dbReference>
<dbReference type="SUPFAM" id="SSF51338">
    <property type="entry name" value="Composite domain of metallo-dependent hydrolases"/>
    <property type="match status" value="1"/>
</dbReference>
<dbReference type="SUPFAM" id="SSF51556">
    <property type="entry name" value="Metallo-dependent hydrolases"/>
    <property type="match status" value="1"/>
</dbReference>
<comment type="function">
    <text evidence="1">Catalyzes the hydrolytic cleavage of the carbon-nitrogen bond in imidazolone-5-propanoate to yield N-formimidoyl-L-glutamate. It is the third step in the universal histidine degradation pathway.</text>
</comment>
<comment type="catalytic activity">
    <reaction evidence="1">
        <text>4-imidazolone-5-propanoate + H2O = N-formimidoyl-L-glutamate</text>
        <dbReference type="Rhea" id="RHEA:23660"/>
        <dbReference type="ChEBI" id="CHEBI:15377"/>
        <dbReference type="ChEBI" id="CHEBI:58928"/>
        <dbReference type="ChEBI" id="CHEBI:77893"/>
        <dbReference type="EC" id="3.5.2.7"/>
    </reaction>
</comment>
<comment type="cofactor">
    <cofactor evidence="1">
        <name>Zn(2+)</name>
        <dbReference type="ChEBI" id="CHEBI:29105"/>
    </cofactor>
    <cofactor evidence="1">
        <name>Fe(3+)</name>
        <dbReference type="ChEBI" id="CHEBI:29034"/>
    </cofactor>
    <text evidence="1">Binds 1 zinc or iron ion per subunit.</text>
</comment>
<comment type="pathway">
    <text evidence="1">Amino-acid degradation; L-histidine degradation into L-glutamate; N-formimidoyl-L-glutamate from L-histidine: step 3/3.</text>
</comment>
<comment type="subcellular location">
    <subcellularLocation>
        <location evidence="1">Cytoplasm</location>
    </subcellularLocation>
</comment>
<comment type="similarity">
    <text evidence="1">Belongs to the metallo-dependent hydrolases superfamily. HutI family.</text>
</comment>
<comment type="sequence caution" evidence="2">
    <conflict type="erroneous initiation">
        <sequence resource="EMBL-CDS" id="AAK34734"/>
    </conflict>
</comment>
<name>HUTI_STRP1</name>